<feature type="chain" id="PRO_0000102850" description="Succinate--CoA ligase [ADP-forming] subunit beta">
    <location>
        <begin position="1"/>
        <end position="386"/>
    </location>
</feature>
<feature type="domain" description="ATP-grasp" evidence="1">
    <location>
        <begin position="9"/>
        <end position="244"/>
    </location>
</feature>
<feature type="binding site" evidence="1">
    <location>
        <position position="46"/>
    </location>
    <ligand>
        <name>ATP</name>
        <dbReference type="ChEBI" id="CHEBI:30616"/>
    </ligand>
</feature>
<feature type="binding site" evidence="1">
    <location>
        <begin position="53"/>
        <end position="55"/>
    </location>
    <ligand>
        <name>ATP</name>
        <dbReference type="ChEBI" id="CHEBI:30616"/>
    </ligand>
</feature>
<feature type="binding site" evidence="1">
    <location>
        <position position="99"/>
    </location>
    <ligand>
        <name>ATP</name>
        <dbReference type="ChEBI" id="CHEBI:30616"/>
    </ligand>
</feature>
<feature type="binding site" evidence="1">
    <location>
        <position position="102"/>
    </location>
    <ligand>
        <name>ATP</name>
        <dbReference type="ChEBI" id="CHEBI:30616"/>
    </ligand>
</feature>
<feature type="binding site" evidence="1">
    <location>
        <position position="107"/>
    </location>
    <ligand>
        <name>ATP</name>
        <dbReference type="ChEBI" id="CHEBI:30616"/>
    </ligand>
</feature>
<feature type="binding site" evidence="1">
    <location>
        <position position="199"/>
    </location>
    <ligand>
        <name>Mg(2+)</name>
        <dbReference type="ChEBI" id="CHEBI:18420"/>
    </ligand>
</feature>
<feature type="binding site" evidence="1">
    <location>
        <position position="213"/>
    </location>
    <ligand>
        <name>Mg(2+)</name>
        <dbReference type="ChEBI" id="CHEBI:18420"/>
    </ligand>
</feature>
<feature type="binding site" evidence="1">
    <location>
        <position position="264"/>
    </location>
    <ligand>
        <name>substrate</name>
        <note>ligand shared with subunit alpha</note>
    </ligand>
</feature>
<feature type="binding site" evidence="1">
    <location>
        <begin position="321"/>
        <end position="323"/>
    </location>
    <ligand>
        <name>substrate</name>
        <note>ligand shared with subunit alpha</note>
    </ligand>
</feature>
<organism>
    <name type="scientific">Rickettsia conorii (strain ATCC VR-613 / Malish 7)</name>
    <dbReference type="NCBI Taxonomy" id="272944"/>
    <lineage>
        <taxon>Bacteria</taxon>
        <taxon>Pseudomonadati</taxon>
        <taxon>Pseudomonadota</taxon>
        <taxon>Alphaproteobacteria</taxon>
        <taxon>Rickettsiales</taxon>
        <taxon>Rickettsiaceae</taxon>
        <taxon>Rickettsieae</taxon>
        <taxon>Rickettsia</taxon>
        <taxon>spotted fever group</taxon>
    </lineage>
</organism>
<evidence type="ECO:0000255" key="1">
    <source>
        <dbReference type="HAMAP-Rule" id="MF_00558"/>
    </source>
</evidence>
<comment type="function">
    <text evidence="1">Succinyl-CoA synthetase functions in the citric acid cycle (TCA), coupling the hydrolysis of succinyl-CoA to the synthesis of either ATP or GTP and thus represents the only step of substrate-level phosphorylation in the TCA. The beta subunit provides nucleotide specificity of the enzyme and binds the substrate succinate, while the binding sites for coenzyme A and phosphate are found in the alpha subunit.</text>
</comment>
<comment type="catalytic activity">
    <reaction evidence="1">
        <text>succinate + ATP + CoA = succinyl-CoA + ADP + phosphate</text>
        <dbReference type="Rhea" id="RHEA:17661"/>
        <dbReference type="ChEBI" id="CHEBI:30031"/>
        <dbReference type="ChEBI" id="CHEBI:30616"/>
        <dbReference type="ChEBI" id="CHEBI:43474"/>
        <dbReference type="ChEBI" id="CHEBI:57287"/>
        <dbReference type="ChEBI" id="CHEBI:57292"/>
        <dbReference type="ChEBI" id="CHEBI:456216"/>
        <dbReference type="EC" id="6.2.1.5"/>
    </reaction>
    <physiologicalReaction direction="right-to-left" evidence="1">
        <dbReference type="Rhea" id="RHEA:17663"/>
    </physiologicalReaction>
</comment>
<comment type="catalytic activity">
    <reaction evidence="1">
        <text>GTP + succinate + CoA = succinyl-CoA + GDP + phosphate</text>
        <dbReference type="Rhea" id="RHEA:22120"/>
        <dbReference type="ChEBI" id="CHEBI:30031"/>
        <dbReference type="ChEBI" id="CHEBI:37565"/>
        <dbReference type="ChEBI" id="CHEBI:43474"/>
        <dbReference type="ChEBI" id="CHEBI:57287"/>
        <dbReference type="ChEBI" id="CHEBI:57292"/>
        <dbReference type="ChEBI" id="CHEBI:58189"/>
    </reaction>
    <physiologicalReaction direction="right-to-left" evidence="1">
        <dbReference type="Rhea" id="RHEA:22122"/>
    </physiologicalReaction>
</comment>
<comment type="cofactor">
    <cofactor evidence="1">
        <name>Mg(2+)</name>
        <dbReference type="ChEBI" id="CHEBI:18420"/>
    </cofactor>
    <text evidence="1">Binds 1 Mg(2+) ion per subunit.</text>
</comment>
<comment type="pathway">
    <text evidence="1">Carbohydrate metabolism; tricarboxylic acid cycle; succinate from succinyl-CoA (ligase route): step 1/1.</text>
</comment>
<comment type="subunit">
    <text evidence="1">Heterotetramer of two alpha and two beta subunits.</text>
</comment>
<comment type="similarity">
    <text evidence="1">Belongs to the succinate/malate CoA ligase beta subunit family.</text>
</comment>
<name>SUCC_RICCN</name>
<gene>
    <name evidence="1" type="primary">sucC</name>
    <name type="ordered locus">RC0599</name>
</gene>
<proteinExistence type="inferred from homology"/>
<protein>
    <recommendedName>
        <fullName evidence="1">Succinate--CoA ligase [ADP-forming] subunit beta</fullName>
        <ecNumber evidence="1">6.2.1.5</ecNumber>
    </recommendedName>
    <alternativeName>
        <fullName evidence="1">Succinyl-CoA synthetase subunit beta</fullName>
        <shortName evidence="1">SCS-beta</shortName>
    </alternativeName>
</protein>
<accession>Q92I21</accession>
<sequence>MNIHEYQAKEILRKYGVPTSTGLVVTKTEKINETIDKLNTEVYVVKAQIHAGGRGKAGGVKVVKSKEEAKKVAHDMFGINLVTHQTGPQGQKVNRLYIESGCDILKEYYFSIVFDRSASCITFIASTEGGIDIEAVAEKTPDKIIKFSVDPATGLQDFHMRGIAYELGFKDNQAKQMKEIVKSVYNAFIETDATQIEINPLIVNSDGNLLALDAKITFDDNGLFRHPNITAMRDHDEEDPLETRAANAGLSYVKMDGNIGCMVNGAGLAMATMDIIKLYGASPANFLDVGGGADRERVKEALKIILSDKEVQGILVNIFGGIMRCDIIAEGIIAAAKDIGIKVPLVVRLAGTNVEKGEEILSNSGLAIIPAHDLADAANKIVEAIR</sequence>
<dbReference type="EC" id="6.2.1.5" evidence="1"/>
<dbReference type="EMBL" id="AE006914">
    <property type="protein sequence ID" value="AAL03137.1"/>
    <property type="molecule type" value="Genomic_DNA"/>
</dbReference>
<dbReference type="PIR" id="G97774">
    <property type="entry name" value="G97774"/>
</dbReference>
<dbReference type="RefSeq" id="WP_010977230.1">
    <property type="nucleotide sequence ID" value="NC_003103.1"/>
</dbReference>
<dbReference type="SMR" id="Q92I21"/>
<dbReference type="GeneID" id="927696"/>
<dbReference type="KEGG" id="rco:RC0599"/>
<dbReference type="PATRIC" id="fig|272944.4.peg.684"/>
<dbReference type="HOGENOM" id="CLU_037430_0_2_5"/>
<dbReference type="UniPathway" id="UPA00223">
    <property type="reaction ID" value="UER00999"/>
</dbReference>
<dbReference type="Proteomes" id="UP000000816">
    <property type="component" value="Chromosome"/>
</dbReference>
<dbReference type="GO" id="GO:0005829">
    <property type="term" value="C:cytosol"/>
    <property type="evidence" value="ECO:0007669"/>
    <property type="project" value="TreeGrafter"/>
</dbReference>
<dbReference type="GO" id="GO:0042709">
    <property type="term" value="C:succinate-CoA ligase complex"/>
    <property type="evidence" value="ECO:0007669"/>
    <property type="project" value="TreeGrafter"/>
</dbReference>
<dbReference type="GO" id="GO:0005524">
    <property type="term" value="F:ATP binding"/>
    <property type="evidence" value="ECO:0007669"/>
    <property type="project" value="UniProtKB-UniRule"/>
</dbReference>
<dbReference type="GO" id="GO:0000287">
    <property type="term" value="F:magnesium ion binding"/>
    <property type="evidence" value="ECO:0007669"/>
    <property type="project" value="UniProtKB-UniRule"/>
</dbReference>
<dbReference type="GO" id="GO:0004775">
    <property type="term" value="F:succinate-CoA ligase (ADP-forming) activity"/>
    <property type="evidence" value="ECO:0007669"/>
    <property type="project" value="UniProtKB-UniRule"/>
</dbReference>
<dbReference type="GO" id="GO:0004776">
    <property type="term" value="F:succinate-CoA ligase (GDP-forming) activity"/>
    <property type="evidence" value="ECO:0007669"/>
    <property type="project" value="RHEA"/>
</dbReference>
<dbReference type="GO" id="GO:0006104">
    <property type="term" value="P:succinyl-CoA metabolic process"/>
    <property type="evidence" value="ECO:0007669"/>
    <property type="project" value="TreeGrafter"/>
</dbReference>
<dbReference type="GO" id="GO:0006099">
    <property type="term" value="P:tricarboxylic acid cycle"/>
    <property type="evidence" value="ECO:0007669"/>
    <property type="project" value="UniProtKB-UniRule"/>
</dbReference>
<dbReference type="FunFam" id="3.30.1490.20:FF:000002">
    <property type="entry name" value="Succinate--CoA ligase [ADP-forming] subunit beta"/>
    <property type="match status" value="1"/>
</dbReference>
<dbReference type="FunFam" id="3.30.470.20:FF:000002">
    <property type="entry name" value="Succinate--CoA ligase [ADP-forming] subunit beta"/>
    <property type="match status" value="1"/>
</dbReference>
<dbReference type="FunFam" id="3.40.50.261:FF:000001">
    <property type="entry name" value="Succinate--CoA ligase [ADP-forming] subunit beta"/>
    <property type="match status" value="1"/>
</dbReference>
<dbReference type="Gene3D" id="3.30.1490.20">
    <property type="entry name" value="ATP-grasp fold, A domain"/>
    <property type="match status" value="1"/>
</dbReference>
<dbReference type="Gene3D" id="3.30.470.20">
    <property type="entry name" value="ATP-grasp fold, B domain"/>
    <property type="match status" value="1"/>
</dbReference>
<dbReference type="Gene3D" id="3.40.50.261">
    <property type="entry name" value="Succinyl-CoA synthetase domains"/>
    <property type="match status" value="1"/>
</dbReference>
<dbReference type="HAMAP" id="MF_00558">
    <property type="entry name" value="Succ_CoA_beta"/>
    <property type="match status" value="1"/>
</dbReference>
<dbReference type="InterPro" id="IPR011761">
    <property type="entry name" value="ATP-grasp"/>
</dbReference>
<dbReference type="InterPro" id="IPR013650">
    <property type="entry name" value="ATP-grasp_succ-CoA_synth-type"/>
</dbReference>
<dbReference type="InterPro" id="IPR013815">
    <property type="entry name" value="ATP_grasp_subdomain_1"/>
</dbReference>
<dbReference type="InterPro" id="IPR017866">
    <property type="entry name" value="Succ-CoA_synthase_bsu_CS"/>
</dbReference>
<dbReference type="InterPro" id="IPR005811">
    <property type="entry name" value="SUCC_ACL_C"/>
</dbReference>
<dbReference type="InterPro" id="IPR005809">
    <property type="entry name" value="Succ_CoA_ligase-like_bsu"/>
</dbReference>
<dbReference type="InterPro" id="IPR016102">
    <property type="entry name" value="Succinyl-CoA_synth-like"/>
</dbReference>
<dbReference type="NCBIfam" id="NF001913">
    <property type="entry name" value="PRK00696.1"/>
    <property type="match status" value="1"/>
</dbReference>
<dbReference type="NCBIfam" id="TIGR01016">
    <property type="entry name" value="sucCoAbeta"/>
    <property type="match status" value="1"/>
</dbReference>
<dbReference type="PANTHER" id="PTHR11815:SF10">
    <property type="entry name" value="SUCCINATE--COA LIGASE [GDP-FORMING] SUBUNIT BETA, MITOCHONDRIAL"/>
    <property type="match status" value="1"/>
</dbReference>
<dbReference type="PANTHER" id="PTHR11815">
    <property type="entry name" value="SUCCINYL-COA SYNTHETASE BETA CHAIN"/>
    <property type="match status" value="1"/>
</dbReference>
<dbReference type="Pfam" id="PF08442">
    <property type="entry name" value="ATP-grasp_2"/>
    <property type="match status" value="1"/>
</dbReference>
<dbReference type="Pfam" id="PF00549">
    <property type="entry name" value="Ligase_CoA"/>
    <property type="match status" value="1"/>
</dbReference>
<dbReference type="PIRSF" id="PIRSF001554">
    <property type="entry name" value="SucCS_beta"/>
    <property type="match status" value="1"/>
</dbReference>
<dbReference type="SUPFAM" id="SSF56059">
    <property type="entry name" value="Glutathione synthetase ATP-binding domain-like"/>
    <property type="match status" value="1"/>
</dbReference>
<dbReference type="SUPFAM" id="SSF52210">
    <property type="entry name" value="Succinyl-CoA synthetase domains"/>
    <property type="match status" value="1"/>
</dbReference>
<dbReference type="PROSITE" id="PS50975">
    <property type="entry name" value="ATP_GRASP"/>
    <property type="match status" value="1"/>
</dbReference>
<dbReference type="PROSITE" id="PS01217">
    <property type="entry name" value="SUCCINYL_COA_LIG_3"/>
    <property type="match status" value="1"/>
</dbReference>
<reference key="1">
    <citation type="journal article" date="2001" name="Science">
        <title>Mechanisms of evolution in Rickettsia conorii and R. prowazekii.</title>
        <authorList>
            <person name="Ogata H."/>
            <person name="Audic S."/>
            <person name="Renesto-Audiffren P."/>
            <person name="Fournier P.-E."/>
            <person name="Barbe V."/>
            <person name="Samson D."/>
            <person name="Roux V."/>
            <person name="Cossart P."/>
            <person name="Weissenbach J."/>
            <person name="Claverie J.-M."/>
            <person name="Raoult D."/>
        </authorList>
    </citation>
    <scope>NUCLEOTIDE SEQUENCE [LARGE SCALE GENOMIC DNA]</scope>
    <source>
        <strain>ATCC VR-613 / Malish 7</strain>
    </source>
</reference>
<keyword id="KW-0067">ATP-binding</keyword>
<keyword id="KW-0436">Ligase</keyword>
<keyword id="KW-0460">Magnesium</keyword>
<keyword id="KW-0479">Metal-binding</keyword>
<keyword id="KW-0547">Nucleotide-binding</keyword>
<keyword id="KW-0816">Tricarboxylic acid cycle</keyword>